<comment type="subcellular location">
    <subcellularLocation>
        <location evidence="2">Host cytoplasm</location>
    </subcellularLocation>
</comment>
<comment type="induction">
    <text evidence="1">Expressed in the early phase of the viral replicative cycle. Expression of early genes is repressed by viral Repc (latency) and favored by viral Ner protein.</text>
</comment>
<protein>
    <recommendedName>
        <fullName>Uncharacterized protein gp6</fullName>
    </recommendedName>
    <alternativeName>
        <fullName>E5</fullName>
    </alternativeName>
    <alternativeName>
        <fullName>Gene product 6</fullName>
        <shortName>gp6</shortName>
    </alternativeName>
</protein>
<proteinExistence type="evidence at transcript level"/>
<keyword id="KW-0244">Early protein</keyword>
<keyword id="KW-1035">Host cytoplasm</keyword>
<keyword id="KW-1185">Reference proteome</keyword>
<dbReference type="EMBL" id="M64097">
    <property type="protein sequence ID" value="AAA32388.1"/>
    <property type="molecule type" value="Genomic_DNA"/>
</dbReference>
<dbReference type="EMBL" id="AF083977">
    <property type="protein sequence ID" value="AAF01085.1"/>
    <property type="molecule type" value="Genomic_DNA"/>
</dbReference>
<dbReference type="PIR" id="JE0003">
    <property type="entry name" value="JE0003"/>
</dbReference>
<dbReference type="RefSeq" id="NP_050610.1">
    <property type="nucleotide sequence ID" value="NC_000929.1"/>
</dbReference>
<dbReference type="GeneID" id="2636264"/>
<dbReference type="KEGG" id="vg:2636264"/>
<dbReference type="Proteomes" id="UP000002611">
    <property type="component" value="Genome"/>
</dbReference>
<dbReference type="Proteomes" id="UP000401936">
    <property type="component" value="Segment"/>
</dbReference>
<dbReference type="GO" id="GO:0030430">
    <property type="term" value="C:host cell cytoplasm"/>
    <property type="evidence" value="ECO:0007669"/>
    <property type="project" value="UniProtKB-SubCell"/>
</dbReference>
<organism>
    <name type="scientific">Escherichia phage Mu</name>
    <name type="common">Bacteriophage Mu</name>
    <dbReference type="NCBI Taxonomy" id="2681603"/>
    <lineage>
        <taxon>Viruses</taxon>
        <taxon>Duplodnaviria</taxon>
        <taxon>Heunggongvirae</taxon>
        <taxon>Uroviricota</taxon>
        <taxon>Caudoviricetes</taxon>
        <taxon>Muvirus</taxon>
        <taxon>Muvirus mu</taxon>
    </lineage>
</organism>
<evidence type="ECO:0000269" key="1">
    <source>
    </source>
</evidence>
<evidence type="ECO:0000305" key="2"/>
<gene>
    <name type="ordered locus">Mup06</name>
</gene>
<organismHost>
    <name type="scientific">Enterobacteriaceae</name>
    <dbReference type="NCBI Taxonomy" id="543"/>
</organismHost>
<accession>Q38477</accession>
<name>GP6_BPMU</name>
<feature type="chain" id="PRO_0000077802" description="Uncharacterized protein gp6">
    <location>
        <begin position="1"/>
        <end position="76"/>
    </location>
</feature>
<reference key="1">
    <citation type="book" date="1987" name="Phage Mu">
        <title>Sequence of the left end of Mu.</title>
        <editorList>
            <person name="Symonds N."/>
            <person name="Toussaint A."/>
            <person name="van de Putte P."/>
            <person name="Howe M.M."/>
        </editorList>
        <authorList>
            <person name="Priess H."/>
            <person name="Brauer B."/>
            <person name="Schmidt C."/>
            <person name="Kamp D."/>
        </authorList>
    </citation>
    <scope>NUCLEOTIDE SEQUENCE [GENOMIC DNA]</scope>
</reference>
<reference key="2">
    <citation type="journal article" date="2002" name="J. Mol. Biol.">
        <title>Bacteriophage Mu genome sequence: analysis and comparison with Mu-like prophages in Haemophilus, Neisseria and Deinococcus.</title>
        <authorList>
            <person name="Morgan G.J."/>
            <person name="Hatfull G.F."/>
            <person name="Casjens S."/>
            <person name="Hendrix R.W."/>
        </authorList>
    </citation>
    <scope>NUCLEOTIDE SEQUENCE [LARGE SCALE GENOMIC DNA]</scope>
</reference>
<reference key="3">
    <citation type="journal article" date="1989" name="J. Bacteriol.">
        <title>Localization and regulation of bacteriophage Mu promoters.</title>
        <authorList>
            <person name="Stoddard S.F."/>
            <person name="Howe M.M."/>
        </authorList>
    </citation>
    <scope>INDUCTION</scope>
</reference>
<sequence>MCIKAEKYIEWVKHCQCHGVPLTTYKCPGCGEQIMTQCSPEKEIRDSLTCCPWCSAVFFKQVKGAKVKASAVIQNQ</sequence>